<evidence type="ECO:0000255" key="1">
    <source>
        <dbReference type="HAMAP-Rule" id="MF_00385"/>
    </source>
</evidence>
<evidence type="ECO:0000256" key="2">
    <source>
        <dbReference type="SAM" id="MobiDB-lite"/>
    </source>
</evidence>
<evidence type="ECO:0000305" key="3"/>
<proteinExistence type="inferred from homology"/>
<gene>
    <name evidence="1" type="primary">rpsP</name>
    <name type="ordered locus">amb4063</name>
</gene>
<sequence length="123" mass="13693">MALKIRLSRGGAKKRPFYKIVVADARAPRDGRFIEKVGTYNPMLPNDNGQRWILDEDRVKHWLSVGAQPTDRLVRFFADKGLVAKPVRAEQTKQPQPKAKAQQRAKDQAERDAAAAAEAAAGE</sequence>
<protein>
    <recommendedName>
        <fullName evidence="1">Small ribosomal subunit protein bS16</fullName>
    </recommendedName>
    <alternativeName>
        <fullName evidence="3">30S ribosomal protein S16</fullName>
    </alternativeName>
</protein>
<accession>Q2VZV8</accession>
<reference key="1">
    <citation type="journal article" date="2005" name="DNA Res.">
        <title>Complete genome sequence of the facultative anaerobic magnetotactic bacterium Magnetospirillum sp. strain AMB-1.</title>
        <authorList>
            <person name="Matsunaga T."/>
            <person name="Okamura Y."/>
            <person name="Fukuda Y."/>
            <person name="Wahyudi A.T."/>
            <person name="Murase Y."/>
            <person name="Takeyama H."/>
        </authorList>
    </citation>
    <scope>NUCLEOTIDE SEQUENCE [LARGE SCALE GENOMIC DNA]</scope>
    <source>
        <strain>ATCC 700264 / AMB-1</strain>
    </source>
</reference>
<feature type="chain" id="PRO_0000243822" description="Small ribosomal subunit protein bS16">
    <location>
        <begin position="1"/>
        <end position="123"/>
    </location>
</feature>
<feature type="region of interest" description="Disordered" evidence="2">
    <location>
        <begin position="86"/>
        <end position="123"/>
    </location>
</feature>
<feature type="compositionally biased region" description="Low complexity" evidence="2">
    <location>
        <begin position="93"/>
        <end position="102"/>
    </location>
</feature>
<feature type="compositionally biased region" description="Basic and acidic residues" evidence="2">
    <location>
        <begin position="104"/>
        <end position="113"/>
    </location>
</feature>
<feature type="compositionally biased region" description="Low complexity" evidence="2">
    <location>
        <begin position="114"/>
        <end position="123"/>
    </location>
</feature>
<comment type="similarity">
    <text evidence="1">Belongs to the bacterial ribosomal protein bS16 family.</text>
</comment>
<organism>
    <name type="scientific">Paramagnetospirillum magneticum (strain ATCC 700264 / AMB-1)</name>
    <name type="common">Magnetospirillum magneticum</name>
    <dbReference type="NCBI Taxonomy" id="342108"/>
    <lineage>
        <taxon>Bacteria</taxon>
        <taxon>Pseudomonadati</taxon>
        <taxon>Pseudomonadota</taxon>
        <taxon>Alphaproteobacteria</taxon>
        <taxon>Rhodospirillales</taxon>
        <taxon>Magnetospirillaceae</taxon>
        <taxon>Paramagnetospirillum</taxon>
    </lineage>
</organism>
<name>RS16_PARM1</name>
<keyword id="KW-0687">Ribonucleoprotein</keyword>
<keyword id="KW-0689">Ribosomal protein</keyword>
<dbReference type="EMBL" id="AP007255">
    <property type="protein sequence ID" value="BAE52867.1"/>
    <property type="molecule type" value="Genomic_DNA"/>
</dbReference>
<dbReference type="RefSeq" id="WP_011386414.1">
    <property type="nucleotide sequence ID" value="NC_007626.1"/>
</dbReference>
<dbReference type="SMR" id="Q2VZV8"/>
<dbReference type="STRING" id="342108.amb4063"/>
<dbReference type="KEGG" id="mag:amb4063"/>
<dbReference type="HOGENOM" id="CLU_100590_3_1_5"/>
<dbReference type="OrthoDB" id="9807878at2"/>
<dbReference type="Proteomes" id="UP000007058">
    <property type="component" value="Chromosome"/>
</dbReference>
<dbReference type="GO" id="GO:0005737">
    <property type="term" value="C:cytoplasm"/>
    <property type="evidence" value="ECO:0007669"/>
    <property type="project" value="UniProtKB-ARBA"/>
</dbReference>
<dbReference type="GO" id="GO:0015935">
    <property type="term" value="C:small ribosomal subunit"/>
    <property type="evidence" value="ECO:0007669"/>
    <property type="project" value="TreeGrafter"/>
</dbReference>
<dbReference type="GO" id="GO:0003735">
    <property type="term" value="F:structural constituent of ribosome"/>
    <property type="evidence" value="ECO:0007669"/>
    <property type="project" value="InterPro"/>
</dbReference>
<dbReference type="GO" id="GO:0006412">
    <property type="term" value="P:translation"/>
    <property type="evidence" value="ECO:0007669"/>
    <property type="project" value="UniProtKB-UniRule"/>
</dbReference>
<dbReference type="Gene3D" id="3.30.1320.10">
    <property type="match status" value="1"/>
</dbReference>
<dbReference type="HAMAP" id="MF_00385">
    <property type="entry name" value="Ribosomal_bS16"/>
    <property type="match status" value="1"/>
</dbReference>
<dbReference type="InterPro" id="IPR000307">
    <property type="entry name" value="Ribosomal_bS16"/>
</dbReference>
<dbReference type="InterPro" id="IPR020592">
    <property type="entry name" value="Ribosomal_bS16_CS"/>
</dbReference>
<dbReference type="InterPro" id="IPR023803">
    <property type="entry name" value="Ribosomal_bS16_dom_sf"/>
</dbReference>
<dbReference type="NCBIfam" id="TIGR00002">
    <property type="entry name" value="S16"/>
    <property type="match status" value="1"/>
</dbReference>
<dbReference type="PANTHER" id="PTHR12919">
    <property type="entry name" value="30S RIBOSOMAL PROTEIN S16"/>
    <property type="match status" value="1"/>
</dbReference>
<dbReference type="PANTHER" id="PTHR12919:SF20">
    <property type="entry name" value="SMALL RIBOSOMAL SUBUNIT PROTEIN BS16M"/>
    <property type="match status" value="1"/>
</dbReference>
<dbReference type="Pfam" id="PF00886">
    <property type="entry name" value="Ribosomal_S16"/>
    <property type="match status" value="1"/>
</dbReference>
<dbReference type="SUPFAM" id="SSF54565">
    <property type="entry name" value="Ribosomal protein S16"/>
    <property type="match status" value="1"/>
</dbReference>
<dbReference type="PROSITE" id="PS00732">
    <property type="entry name" value="RIBOSOMAL_S16"/>
    <property type="match status" value="1"/>
</dbReference>